<accession>P52159</accession>
<accession>B4LTD4</accession>
<gene>
    <name type="primary">cni</name>
    <name type="ORF">GJ17163</name>
</gene>
<dbReference type="EMBL" id="CH940649">
    <property type="protein sequence ID" value="EDW63904.1"/>
    <property type="molecule type" value="Genomic_DNA"/>
</dbReference>
<dbReference type="RefSeq" id="XP_002051749.1">
    <property type="nucleotide sequence ID" value="XM_002051713.4"/>
</dbReference>
<dbReference type="RefSeq" id="XP_015028255.1">
    <property type="nucleotide sequence ID" value="XM_015172769.3"/>
</dbReference>
<dbReference type="SMR" id="P52159"/>
<dbReference type="FunCoup" id="P52159">
    <property type="interactions" value="1350"/>
</dbReference>
<dbReference type="STRING" id="7244.P52159"/>
<dbReference type="EnsemblMetazoa" id="FBtr0233088">
    <property type="protein sequence ID" value="FBpp0231580"/>
    <property type="gene ID" value="FBgn0266015"/>
</dbReference>
<dbReference type="EnsemblMetazoa" id="FBtr0437082">
    <property type="protein sequence ID" value="FBpp0393936"/>
    <property type="gene ID" value="FBgn0266015"/>
</dbReference>
<dbReference type="EnsemblMetazoa" id="XM_002051713.3">
    <property type="protein sequence ID" value="XP_002051749.1"/>
    <property type="gene ID" value="LOC6627732"/>
</dbReference>
<dbReference type="EnsemblMetazoa" id="XM_015172769.2">
    <property type="protein sequence ID" value="XP_015028255.1"/>
    <property type="gene ID" value="LOC6627732"/>
</dbReference>
<dbReference type="GeneID" id="6627732"/>
<dbReference type="KEGG" id="dvi:6627732"/>
<dbReference type="CTD" id="34967"/>
<dbReference type="eggNOG" id="KOG2729">
    <property type="taxonomic scope" value="Eukaryota"/>
</dbReference>
<dbReference type="HOGENOM" id="CLU_112942_1_0_1"/>
<dbReference type="InParanoid" id="P52159"/>
<dbReference type="OMA" id="FAVFHVI"/>
<dbReference type="OrthoDB" id="434393at2759"/>
<dbReference type="PhylomeDB" id="P52159"/>
<dbReference type="Proteomes" id="UP000008792">
    <property type="component" value="Unassembled WGS sequence"/>
</dbReference>
<dbReference type="GO" id="GO:0005789">
    <property type="term" value="C:endoplasmic reticulum membrane"/>
    <property type="evidence" value="ECO:0000250"/>
    <property type="project" value="UniProtKB"/>
</dbReference>
<dbReference type="GO" id="GO:0009952">
    <property type="term" value="P:anterior/posterior pattern specification"/>
    <property type="evidence" value="ECO:0007669"/>
    <property type="project" value="EnsemblMetazoa"/>
</dbReference>
<dbReference type="GO" id="GO:0007350">
    <property type="term" value="P:blastoderm segmentation"/>
    <property type="evidence" value="ECO:0007669"/>
    <property type="project" value="EnsemblMetazoa"/>
</dbReference>
<dbReference type="GO" id="GO:0046843">
    <property type="term" value="P:dorsal appendage formation"/>
    <property type="evidence" value="ECO:0007669"/>
    <property type="project" value="EnsemblMetazoa"/>
</dbReference>
<dbReference type="GO" id="GO:0006888">
    <property type="term" value="P:endoplasmic reticulum to Golgi vesicle-mediated transport"/>
    <property type="evidence" value="ECO:0000250"/>
    <property type="project" value="UniProtKB"/>
</dbReference>
<dbReference type="GO" id="GO:0007310">
    <property type="term" value="P:oocyte dorsal/ventral axis specification"/>
    <property type="evidence" value="ECO:0007669"/>
    <property type="project" value="EnsemblMetazoa"/>
</dbReference>
<dbReference type="GO" id="GO:0015031">
    <property type="term" value="P:protein transport"/>
    <property type="evidence" value="ECO:0007669"/>
    <property type="project" value="UniProtKB-KW"/>
</dbReference>
<dbReference type="InterPro" id="IPR003377">
    <property type="entry name" value="Cornichon"/>
</dbReference>
<dbReference type="InterPro" id="IPR033466">
    <property type="entry name" value="Cornichon_conserved"/>
</dbReference>
<dbReference type="PANTHER" id="PTHR12290">
    <property type="entry name" value="CORNICHON-RELATED"/>
    <property type="match status" value="1"/>
</dbReference>
<dbReference type="Pfam" id="PF03311">
    <property type="entry name" value="Cornichon"/>
    <property type="match status" value="1"/>
</dbReference>
<dbReference type="SMART" id="SM01398">
    <property type="entry name" value="Cornichon"/>
    <property type="match status" value="1"/>
</dbReference>
<dbReference type="PROSITE" id="PS01340">
    <property type="entry name" value="CORNICHON"/>
    <property type="match status" value="1"/>
</dbReference>
<proteinExistence type="inferred from homology"/>
<sequence length="144" mass="16867">MAFNFTAFTYIVALIGDAFLIFFAIFHVIAFDELKTDYKNPIDQCNSLNPLVLPEYLLHLFLNLLFLFCGEWYSLCLNIPLIAYHIWRYKNRPLMSGPGLYDPTTVLKTDTLSRNLREGWIKLAVYLISFFYYIYGMVYSLIST</sequence>
<feature type="chain" id="PRO_0000122235" description="Protein cornichon">
    <location>
        <begin position="1"/>
        <end position="144"/>
    </location>
</feature>
<feature type="topological domain" description="Lumenal" evidence="2">
    <location>
        <begin position="1"/>
        <end position="10"/>
    </location>
</feature>
<feature type="transmembrane region" description="Helical" evidence="2">
    <location>
        <begin position="11"/>
        <end position="31"/>
    </location>
</feature>
<feature type="topological domain" description="Cytoplasmic" evidence="2">
    <location>
        <begin position="32"/>
        <end position="56"/>
    </location>
</feature>
<feature type="transmembrane region" description="Helical" evidence="2">
    <location>
        <begin position="57"/>
        <end position="77"/>
    </location>
</feature>
<feature type="topological domain" description="Lumenal" evidence="2">
    <location>
        <begin position="78"/>
        <end position="122"/>
    </location>
</feature>
<feature type="transmembrane region" description="Helical" evidence="2">
    <location>
        <begin position="123"/>
        <end position="143"/>
    </location>
</feature>
<feature type="topological domain" description="Cytoplasmic" evidence="2">
    <location>
        <position position="144"/>
    </location>
</feature>
<feature type="region of interest" description="Interaction with grk" evidence="1">
    <location>
        <begin position="1"/>
        <end position="57"/>
    </location>
</feature>
<feature type="sequence conflict" description="In Ref. 1." evidence="3" ref="1">
    <original>S</original>
    <variation>F</variation>
    <location>
        <position position="113"/>
    </location>
</feature>
<comment type="function">
    <text evidence="1">Acts as a cargo receptor necessary for the transportation of gurken (grk) to a transitional endoplasmic reticulum (tER) site and promotes its incorporation into coat protein complex II (COPII) vesicles. Associated with gurken, produces a signal received by torpedo resulting in a signaling pathway that first establishes posterior follicle cell fates and normal localization of the anterior and posterior determinants, later they act in a signaling event inducing dorsal follicle cell fates and regulating the dorsal-ventral pattern of egg and embryo (By similarity).</text>
</comment>
<comment type="subunit">
    <text evidence="1">Interacts with grk.</text>
</comment>
<comment type="subcellular location">
    <subcellularLocation>
        <location evidence="1">Endoplasmic reticulum membrane</location>
        <topology evidence="1">Multi-pass membrane protein</topology>
    </subcellularLocation>
</comment>
<comment type="similarity">
    <text evidence="3">Belongs to the cornichon family.</text>
</comment>
<keyword id="KW-0217">Developmental protein</keyword>
<keyword id="KW-0256">Endoplasmic reticulum</keyword>
<keyword id="KW-0931">ER-Golgi transport</keyword>
<keyword id="KW-0472">Membrane</keyword>
<keyword id="KW-0653">Protein transport</keyword>
<keyword id="KW-0675">Receptor</keyword>
<keyword id="KW-1185">Reference proteome</keyword>
<keyword id="KW-0812">Transmembrane</keyword>
<keyword id="KW-1133">Transmembrane helix</keyword>
<keyword id="KW-0813">Transport</keyword>
<protein>
    <recommendedName>
        <fullName>Protein cornichon</fullName>
    </recommendedName>
</protein>
<organism>
    <name type="scientific">Drosophila virilis</name>
    <name type="common">Fruit fly</name>
    <dbReference type="NCBI Taxonomy" id="7244"/>
    <lineage>
        <taxon>Eukaryota</taxon>
        <taxon>Metazoa</taxon>
        <taxon>Ecdysozoa</taxon>
        <taxon>Arthropoda</taxon>
        <taxon>Hexapoda</taxon>
        <taxon>Insecta</taxon>
        <taxon>Pterygota</taxon>
        <taxon>Neoptera</taxon>
        <taxon>Endopterygota</taxon>
        <taxon>Diptera</taxon>
        <taxon>Brachycera</taxon>
        <taxon>Muscomorpha</taxon>
        <taxon>Ephydroidea</taxon>
        <taxon>Drosophilidae</taxon>
        <taxon>Drosophila</taxon>
    </lineage>
</organism>
<evidence type="ECO:0000250" key="1"/>
<evidence type="ECO:0000255" key="2"/>
<evidence type="ECO:0000305" key="3"/>
<reference key="1">
    <citation type="journal article" date="1995" name="Cell">
        <title>Cornichon and the EGF receptor signaling process are necessary for both anterior-posterior and dorsal-ventral pattern formation in Drosophila.</title>
        <authorList>
            <person name="Roth S."/>
            <person name="Neuman-Silberberg F.S."/>
            <person name="Barcelo G."/>
            <person name="Schuepbach T."/>
        </authorList>
    </citation>
    <scope>NUCLEOTIDE SEQUENCE [GENOMIC DNA]</scope>
    <source>
        <tissue>Ovary</tissue>
    </source>
</reference>
<reference key="2">
    <citation type="journal article" date="2007" name="Nature">
        <title>Evolution of genes and genomes on the Drosophila phylogeny.</title>
        <authorList>
            <consortium name="Drosophila 12 genomes consortium"/>
        </authorList>
    </citation>
    <scope>NUCLEOTIDE SEQUENCE [LARGE SCALE GENOMIC DNA]</scope>
    <source>
        <strain>Tucson 15010-1051.87</strain>
    </source>
</reference>
<name>CNI_DROVI</name>